<feature type="chain" id="PRO_0000413039" description="Extracellular signal-regulated kinase 1">
    <location>
        <begin position="1"/>
        <end position="415"/>
    </location>
</feature>
<feature type="domain" description="Protein kinase" evidence="2">
    <location>
        <begin position="66"/>
        <end position="369"/>
    </location>
</feature>
<feature type="short sequence motif" description="TXY">
    <location>
        <begin position="226"/>
        <end position="228"/>
    </location>
</feature>
<feature type="active site" description="Proton acceptor" evidence="2 3">
    <location>
        <position position="190"/>
    </location>
</feature>
<feature type="binding site" evidence="2">
    <location>
        <begin position="72"/>
        <end position="80"/>
    </location>
    <ligand>
        <name>ATP</name>
        <dbReference type="ChEBI" id="CHEBI:30616"/>
    </ligand>
</feature>
<feature type="binding site" evidence="2">
    <location>
        <position position="95"/>
    </location>
    <ligand>
        <name>ATP</name>
        <dbReference type="ChEBI" id="CHEBI:30616"/>
    </ligand>
</feature>
<feature type="modified residue" description="Phosphothreonine" evidence="1">
    <location>
        <position position="226"/>
    </location>
</feature>
<feature type="modified residue" description="Phosphotyrosine" evidence="1">
    <location>
        <position position="228"/>
    </location>
</feature>
<feature type="sequence conflict" description="In Ref. 1; AAA34343." evidence="4" ref="1">
    <original>S</original>
    <variation>SS</variation>
    <location>
        <position position="53"/>
    </location>
</feature>
<comment type="catalytic activity">
    <reaction>
        <text>L-seryl-[protein] + ATP = O-phospho-L-seryl-[protein] + ADP + H(+)</text>
        <dbReference type="Rhea" id="RHEA:17989"/>
        <dbReference type="Rhea" id="RHEA-COMP:9863"/>
        <dbReference type="Rhea" id="RHEA-COMP:11604"/>
        <dbReference type="ChEBI" id="CHEBI:15378"/>
        <dbReference type="ChEBI" id="CHEBI:29999"/>
        <dbReference type="ChEBI" id="CHEBI:30616"/>
        <dbReference type="ChEBI" id="CHEBI:83421"/>
        <dbReference type="ChEBI" id="CHEBI:456216"/>
        <dbReference type="EC" id="2.7.11.24"/>
    </reaction>
</comment>
<comment type="catalytic activity">
    <reaction>
        <text>L-threonyl-[protein] + ATP = O-phospho-L-threonyl-[protein] + ADP + H(+)</text>
        <dbReference type="Rhea" id="RHEA:46608"/>
        <dbReference type="Rhea" id="RHEA-COMP:11060"/>
        <dbReference type="Rhea" id="RHEA-COMP:11605"/>
        <dbReference type="ChEBI" id="CHEBI:15378"/>
        <dbReference type="ChEBI" id="CHEBI:30013"/>
        <dbReference type="ChEBI" id="CHEBI:30616"/>
        <dbReference type="ChEBI" id="CHEBI:61977"/>
        <dbReference type="ChEBI" id="CHEBI:456216"/>
        <dbReference type="EC" id="2.7.11.24"/>
    </reaction>
</comment>
<comment type="cofactor">
    <cofactor evidence="1">
        <name>Mg(2+)</name>
        <dbReference type="ChEBI" id="CHEBI:18420"/>
    </cofactor>
</comment>
<comment type="activity regulation">
    <text evidence="1">Activated by tyrosine and threonine phosphorylation.</text>
</comment>
<comment type="domain">
    <text>The TXY motif contains the threonine and tyrosine residues whose phosphorylation activates the MAP kinases.</text>
</comment>
<comment type="PTM">
    <text evidence="1">Dually phosphorylated on Thr-226 and Tyr-228, which activates the enzyme.</text>
</comment>
<comment type="similarity">
    <text evidence="4">Belongs to the protein kinase superfamily. CMGC Ser/Thr protein kinase family. MAP kinase subfamily.</text>
</comment>
<comment type="sequence caution" evidence="4">
    <conflict type="erroneous initiation">
        <sequence resource="EMBL-CDS" id="AAA34343"/>
    </conflict>
    <text>Extended N-terminus.</text>
</comment>
<organism>
    <name type="scientific">Candida albicans (strain WO-1)</name>
    <name type="common">Yeast</name>
    <dbReference type="NCBI Taxonomy" id="294748"/>
    <lineage>
        <taxon>Eukaryota</taxon>
        <taxon>Fungi</taxon>
        <taxon>Dikarya</taxon>
        <taxon>Ascomycota</taxon>
        <taxon>Saccharomycotina</taxon>
        <taxon>Pichiomycetes</taxon>
        <taxon>Debaryomycetaceae</taxon>
        <taxon>Candida/Lodderomyces clade</taxon>
        <taxon>Candida</taxon>
    </lineage>
</organism>
<keyword id="KW-0067">ATP-binding</keyword>
<keyword id="KW-0131">Cell cycle</keyword>
<keyword id="KW-0132">Cell division</keyword>
<keyword id="KW-0418">Kinase</keyword>
<keyword id="KW-0498">Mitosis</keyword>
<keyword id="KW-0547">Nucleotide-binding</keyword>
<keyword id="KW-0597">Phosphoprotein</keyword>
<keyword id="KW-0723">Serine/threonine-protein kinase</keyword>
<keyword id="KW-0808">Transferase</keyword>
<sequence length="415" mass="47836">MNIDQHHQLQQQHQQQMLQQQAQAQAQAQAQAQQQQQAAAAAAAANAAATTSSSPRQVSFNVSDHYQILEIVGEGAYGIVCSAIHKPSQQKVAIKKIEPFERSMLCLRTLRELKLLKHFNHENIISILAIQRPINYESFNEIYLIQELMETDLHRVIRTQNLSDDHIQYFIYQTLRALKAMHSANVLHRDLKPSNLLLNSNCDLKICDFGLARSIASQEDNYGFMTEYVATRWYRAPEIMLTFQEYTTAIDVWSVGCILAEMLSGRPLFPGRDYHNQLWLIMEVLGTPNMEDYYNIKSKRAREYIRSLPFCKKIPFSELFANTNNNTSTSNTGGRTNINPLALDLLEKLLIFNPAKRITVEDALKHPYLQLYHDPNDEPISDKIPEDFFDFDKMKDQLTIEDLKKLLYEEIMKPL</sequence>
<reference key="1">
    <citation type="journal article" date="1992" name="Proc. Natl. Acad. Sci. U.S.A.">
        <title>Dominant negative selection of heterologous genes: isolation of Candida albicans genes that interfere with Saccharomyces cerevisiae mating factor-induced cell cycle arrest.</title>
        <authorList>
            <person name="Whiteway M."/>
            <person name="Dignard D."/>
            <person name="Thomas D.Y."/>
        </authorList>
    </citation>
    <scope>NUCLEOTIDE SEQUENCE [GENOMIC DNA]</scope>
    <source>
        <strain>WO-1</strain>
    </source>
</reference>
<reference key="2">
    <citation type="journal article" date="2009" name="Nature">
        <title>Evolution of pathogenicity and sexual reproduction in eight Candida genomes.</title>
        <authorList>
            <person name="Butler G."/>
            <person name="Rasmussen M.D."/>
            <person name="Lin M.F."/>
            <person name="Santos M.A.S."/>
            <person name="Sakthikumar S."/>
            <person name="Munro C.A."/>
            <person name="Rheinbay E."/>
            <person name="Grabherr M."/>
            <person name="Forche A."/>
            <person name="Reedy J.L."/>
            <person name="Agrafioti I."/>
            <person name="Arnaud M.B."/>
            <person name="Bates S."/>
            <person name="Brown A.J.P."/>
            <person name="Brunke S."/>
            <person name="Costanzo M.C."/>
            <person name="Fitzpatrick D.A."/>
            <person name="de Groot P.W.J."/>
            <person name="Harris D."/>
            <person name="Hoyer L.L."/>
            <person name="Hube B."/>
            <person name="Klis F.M."/>
            <person name="Kodira C."/>
            <person name="Lennard N."/>
            <person name="Logue M.E."/>
            <person name="Martin R."/>
            <person name="Neiman A.M."/>
            <person name="Nikolaou E."/>
            <person name="Quail M.A."/>
            <person name="Quinn J."/>
            <person name="Santos M.C."/>
            <person name="Schmitzberger F.F."/>
            <person name="Sherlock G."/>
            <person name="Shah P."/>
            <person name="Silverstein K.A.T."/>
            <person name="Skrzypek M.S."/>
            <person name="Soll D."/>
            <person name="Staggs R."/>
            <person name="Stansfield I."/>
            <person name="Stumpf M.P.H."/>
            <person name="Sudbery P.E."/>
            <person name="Srikantha T."/>
            <person name="Zeng Q."/>
            <person name="Berman J."/>
            <person name="Berriman M."/>
            <person name="Heitman J."/>
            <person name="Gow N.A.R."/>
            <person name="Lorenz M.C."/>
            <person name="Birren B.W."/>
            <person name="Kellis M."/>
            <person name="Cuomo C.A."/>
        </authorList>
    </citation>
    <scope>NUCLEOTIDE SEQUENCE [LARGE SCALE GENOMIC DNA]</scope>
    <source>
        <strain>WO-1</strain>
    </source>
</reference>
<protein>
    <recommendedName>
        <fullName>Extracellular signal-regulated kinase 1</fullName>
        <shortName>ERK1</shortName>
        <ecNumber>2.7.11.24</ecNumber>
    </recommendedName>
    <alternativeName>
        <fullName>MAP kinase 1</fullName>
        <shortName>MAPK 1</shortName>
    </alternativeName>
</protein>
<accession>C4YGK0</accession>
<accession>P28869</accession>
<accession>P87079</accession>
<accession>P87080</accession>
<accession>P87081</accession>
<accession>P87082</accession>
<accession>P87083</accession>
<accession>P87084</accession>
<accession>P87085</accession>
<accession>P87086</accession>
<accession>P87322</accession>
<evidence type="ECO:0000250" key="1"/>
<evidence type="ECO:0000255" key="2">
    <source>
        <dbReference type="PROSITE-ProRule" id="PRU00159"/>
    </source>
</evidence>
<evidence type="ECO:0000255" key="3">
    <source>
        <dbReference type="PROSITE-ProRule" id="PRU10027"/>
    </source>
</evidence>
<evidence type="ECO:0000305" key="4"/>
<gene>
    <name type="primary">CEK1</name>
    <name type="synonym">ERK1</name>
    <name type="ORF">CAWG_03179</name>
</gene>
<name>ERK1_CANAW</name>
<proteinExistence type="inferred from homology"/>
<dbReference type="EC" id="2.7.11.24"/>
<dbReference type="EMBL" id="M76585">
    <property type="protein sequence ID" value="AAA34343.2"/>
    <property type="status" value="ALT_INIT"/>
    <property type="molecule type" value="Genomic_DNA"/>
</dbReference>
<dbReference type="EMBL" id="CH672349">
    <property type="protein sequence ID" value="EEQ44882.1"/>
    <property type="molecule type" value="Genomic_DNA"/>
</dbReference>
<dbReference type="PIR" id="A47211">
    <property type="entry name" value="A47211"/>
</dbReference>
<dbReference type="SMR" id="C4YGK0"/>
<dbReference type="PaxDb" id="5476-C4YGK0"/>
<dbReference type="VEuPathDB" id="FungiDB:CAWG_03179"/>
<dbReference type="HOGENOM" id="CLU_000288_181_1_1"/>
<dbReference type="OMA" id="CYFLYQM"/>
<dbReference type="OrthoDB" id="8964at766764"/>
<dbReference type="BRENDA" id="2.7.11.24">
    <property type="organism ID" value="1096"/>
</dbReference>
<dbReference type="Proteomes" id="UP000001429">
    <property type="component" value="Chromosome 4, Supercontig 1.4"/>
</dbReference>
<dbReference type="GO" id="GO:0005524">
    <property type="term" value="F:ATP binding"/>
    <property type="evidence" value="ECO:0007669"/>
    <property type="project" value="UniProtKB-KW"/>
</dbReference>
<dbReference type="GO" id="GO:0004707">
    <property type="term" value="F:MAP kinase activity"/>
    <property type="evidence" value="ECO:0007669"/>
    <property type="project" value="UniProtKB-EC"/>
</dbReference>
<dbReference type="GO" id="GO:0106310">
    <property type="term" value="F:protein serine kinase activity"/>
    <property type="evidence" value="ECO:0007669"/>
    <property type="project" value="RHEA"/>
</dbReference>
<dbReference type="GO" id="GO:0051301">
    <property type="term" value="P:cell division"/>
    <property type="evidence" value="ECO:0007669"/>
    <property type="project" value="UniProtKB-KW"/>
</dbReference>
<dbReference type="GO" id="GO:0030447">
    <property type="term" value="P:filamentous growth"/>
    <property type="evidence" value="ECO:0007669"/>
    <property type="project" value="UniProtKB-ARBA"/>
</dbReference>
<dbReference type="CDD" id="cd07849">
    <property type="entry name" value="STKc_ERK1_2_like"/>
    <property type="match status" value="1"/>
</dbReference>
<dbReference type="FunFam" id="1.10.510.10:FF:000040">
    <property type="entry name" value="Mitogen-activated protein kinase"/>
    <property type="match status" value="1"/>
</dbReference>
<dbReference type="FunFam" id="3.30.200.20:FF:000073">
    <property type="entry name" value="Mitogen-activated protein kinase"/>
    <property type="match status" value="1"/>
</dbReference>
<dbReference type="Gene3D" id="3.30.200.20">
    <property type="entry name" value="Phosphorylase Kinase, domain 1"/>
    <property type="match status" value="1"/>
</dbReference>
<dbReference type="Gene3D" id="1.10.510.10">
    <property type="entry name" value="Transferase(Phosphotransferase) domain 1"/>
    <property type="match status" value="1"/>
</dbReference>
<dbReference type="InterPro" id="IPR011009">
    <property type="entry name" value="Kinase-like_dom_sf"/>
</dbReference>
<dbReference type="InterPro" id="IPR050117">
    <property type="entry name" value="MAP_kinase"/>
</dbReference>
<dbReference type="InterPro" id="IPR003527">
    <property type="entry name" value="MAP_kinase_CS"/>
</dbReference>
<dbReference type="InterPro" id="IPR000719">
    <property type="entry name" value="Prot_kinase_dom"/>
</dbReference>
<dbReference type="InterPro" id="IPR017441">
    <property type="entry name" value="Protein_kinase_ATP_BS"/>
</dbReference>
<dbReference type="InterPro" id="IPR008271">
    <property type="entry name" value="Ser/Thr_kinase_AS"/>
</dbReference>
<dbReference type="PANTHER" id="PTHR24055">
    <property type="entry name" value="MITOGEN-ACTIVATED PROTEIN KINASE"/>
    <property type="match status" value="1"/>
</dbReference>
<dbReference type="Pfam" id="PF00069">
    <property type="entry name" value="Pkinase"/>
    <property type="match status" value="1"/>
</dbReference>
<dbReference type="SMART" id="SM00220">
    <property type="entry name" value="S_TKc"/>
    <property type="match status" value="1"/>
</dbReference>
<dbReference type="SUPFAM" id="SSF81995">
    <property type="entry name" value="beta-sandwich domain of Sec23/24"/>
    <property type="match status" value="1"/>
</dbReference>
<dbReference type="SUPFAM" id="SSF56112">
    <property type="entry name" value="Protein kinase-like (PK-like)"/>
    <property type="match status" value="1"/>
</dbReference>
<dbReference type="PROSITE" id="PS01351">
    <property type="entry name" value="MAPK"/>
    <property type="match status" value="1"/>
</dbReference>
<dbReference type="PROSITE" id="PS00107">
    <property type="entry name" value="PROTEIN_KINASE_ATP"/>
    <property type="match status" value="1"/>
</dbReference>
<dbReference type="PROSITE" id="PS50011">
    <property type="entry name" value="PROTEIN_KINASE_DOM"/>
    <property type="match status" value="1"/>
</dbReference>
<dbReference type="PROSITE" id="PS00108">
    <property type="entry name" value="PROTEIN_KINASE_ST"/>
    <property type="match status" value="1"/>
</dbReference>